<accession>P85762</accession>
<protein>
    <recommendedName>
        <fullName evidence="3">Periviscerokinin-2</fullName>
        <shortName evidence="3">PycSu-PVK-2</shortName>
    </recommendedName>
</protein>
<name>PVK2_PYCSU</name>
<evidence type="ECO:0000255" key="1"/>
<evidence type="ECO:0000269" key="2">
    <source>
    </source>
</evidence>
<evidence type="ECO:0000303" key="3">
    <source>
    </source>
</evidence>
<evidence type="ECO:0000305" key="4"/>
<comment type="function">
    <text evidence="4">Mediates visceral muscle contractile activity (myotropic activity).</text>
</comment>
<comment type="subcellular location">
    <subcellularLocation>
        <location evidence="4">Secreted</location>
    </subcellularLocation>
</comment>
<comment type="similarity">
    <text evidence="1">Belongs to the periviscerokinin family.</text>
</comment>
<organism>
    <name type="scientific">Pycnoscelus surinamensis</name>
    <name type="common">Surinam cockroach</name>
    <name type="synonym">Blatta surinamensis</name>
    <dbReference type="NCBI Taxonomy" id="36961"/>
    <lineage>
        <taxon>Eukaryota</taxon>
        <taxon>Metazoa</taxon>
        <taxon>Ecdysozoa</taxon>
        <taxon>Arthropoda</taxon>
        <taxon>Hexapoda</taxon>
        <taxon>Insecta</taxon>
        <taxon>Pterygota</taxon>
        <taxon>Neoptera</taxon>
        <taxon>Polyneoptera</taxon>
        <taxon>Dictyoptera</taxon>
        <taxon>Blattodea</taxon>
        <taxon>Blaberoidea</taxon>
        <taxon>Blaberidae</taxon>
        <taxon>Pycnoscelinae</taxon>
        <taxon>Pycnoscelus</taxon>
    </lineage>
</organism>
<proteinExistence type="evidence at protein level"/>
<sequence length="11" mass="1103">GSSGLISMPRV</sequence>
<feature type="peptide" id="PRO_0000378811" description="Periviscerokinin-2" evidence="2">
    <location>
        <begin position="1"/>
        <end position="11"/>
    </location>
</feature>
<feature type="modified residue" description="Valine amide" evidence="2">
    <location>
        <position position="11"/>
    </location>
</feature>
<dbReference type="GO" id="GO:0005576">
    <property type="term" value="C:extracellular region"/>
    <property type="evidence" value="ECO:0007669"/>
    <property type="project" value="UniProtKB-SubCell"/>
</dbReference>
<dbReference type="GO" id="GO:0007218">
    <property type="term" value="P:neuropeptide signaling pathway"/>
    <property type="evidence" value="ECO:0007669"/>
    <property type="project" value="UniProtKB-KW"/>
</dbReference>
<dbReference type="InterPro" id="IPR013231">
    <property type="entry name" value="Periviscerokinin"/>
</dbReference>
<dbReference type="Pfam" id="PF08259">
    <property type="entry name" value="Periviscerokin"/>
    <property type="match status" value="1"/>
</dbReference>
<reference evidence="4" key="1">
    <citation type="journal article" date="2009" name="BMC Evol. Biol.">
        <title>A proteomic approach for studying insect phylogeny: CAPA peptides of ancient insect taxa (Dictyoptera, Blattoptera) as a test case.</title>
        <authorList>
            <person name="Roth S."/>
            <person name="Fromm B."/>
            <person name="Gaede G."/>
            <person name="Predel R."/>
        </authorList>
    </citation>
    <scope>PROTEIN SEQUENCE</scope>
    <scope>AMIDATION AT VAL-11</scope>
    <source>
        <tissue evidence="2">Abdominal perisympathetic organs</tissue>
    </source>
</reference>
<keyword id="KW-0027">Amidation</keyword>
<keyword id="KW-0903">Direct protein sequencing</keyword>
<keyword id="KW-0527">Neuropeptide</keyword>
<keyword id="KW-0964">Secreted</keyword>